<evidence type="ECO:0000255" key="1">
    <source>
        <dbReference type="HAMAP-Rule" id="MF_00095"/>
    </source>
</evidence>
<sequence>MKFSPALQSATLILRYKRFLADVVTPAGEHLTLHCPNTGAMTGCATPGDTVWYSTSENLKRKYAHTWEITETQQGAFICVNTQRANQLVKEAIATHTIPELTGYGSIKGEVKYGEEGSRIDFMLQADDRPECYIEVKSVTLADRDNGYFPDAVTLRGQKHLRELMSVAATGKRAVLLFAVLHSAIERFSPARHIDPKYAQLLNEAQKQGVEILAYKAELSADNMTLKSTLPVVL</sequence>
<reference key="1">
    <citation type="journal article" date="2010" name="PLoS Genet.">
        <title>Genome sequence of the plant growth promoting endophytic bacterium Enterobacter sp. 638.</title>
        <authorList>
            <person name="Taghavi S."/>
            <person name="van der Lelie D."/>
            <person name="Hoffman A."/>
            <person name="Zhang Y.B."/>
            <person name="Walla M.D."/>
            <person name="Vangronsveld J."/>
            <person name="Newman L."/>
            <person name="Monchy S."/>
        </authorList>
    </citation>
    <scope>NUCLEOTIDE SEQUENCE [LARGE SCALE GENOMIC DNA]</scope>
    <source>
        <strain>638</strain>
    </source>
</reference>
<accession>A4W6P3</accession>
<feature type="chain" id="PRO_1000057630" description="Sugar fermentation stimulation protein homolog">
    <location>
        <begin position="1"/>
        <end position="234"/>
    </location>
</feature>
<organism>
    <name type="scientific">Enterobacter sp. (strain 638)</name>
    <dbReference type="NCBI Taxonomy" id="399742"/>
    <lineage>
        <taxon>Bacteria</taxon>
        <taxon>Pseudomonadati</taxon>
        <taxon>Pseudomonadota</taxon>
        <taxon>Gammaproteobacteria</taxon>
        <taxon>Enterobacterales</taxon>
        <taxon>Enterobacteriaceae</taxon>
        <taxon>Enterobacter</taxon>
    </lineage>
</organism>
<dbReference type="EMBL" id="CP000653">
    <property type="protein sequence ID" value="ABP59373.1"/>
    <property type="molecule type" value="Genomic_DNA"/>
</dbReference>
<dbReference type="RefSeq" id="WP_012016094.1">
    <property type="nucleotide sequence ID" value="NC_009436.1"/>
</dbReference>
<dbReference type="SMR" id="A4W6P3"/>
<dbReference type="STRING" id="399742.Ent638_0686"/>
<dbReference type="KEGG" id="ent:Ent638_0686"/>
<dbReference type="eggNOG" id="COG1489">
    <property type="taxonomic scope" value="Bacteria"/>
</dbReference>
<dbReference type="HOGENOM" id="CLU_052299_2_0_6"/>
<dbReference type="OrthoDB" id="9802365at2"/>
<dbReference type="Proteomes" id="UP000000230">
    <property type="component" value="Chromosome"/>
</dbReference>
<dbReference type="GO" id="GO:0003677">
    <property type="term" value="F:DNA binding"/>
    <property type="evidence" value="ECO:0007669"/>
    <property type="project" value="InterPro"/>
</dbReference>
<dbReference type="CDD" id="cd22359">
    <property type="entry name" value="SfsA-like_bacterial"/>
    <property type="match status" value="1"/>
</dbReference>
<dbReference type="FunFam" id="2.40.50.580:FF:000001">
    <property type="entry name" value="Sugar fermentation stimulation protein A"/>
    <property type="match status" value="1"/>
</dbReference>
<dbReference type="FunFam" id="3.40.1350.60:FF:000001">
    <property type="entry name" value="Sugar fermentation stimulation protein A"/>
    <property type="match status" value="1"/>
</dbReference>
<dbReference type="Gene3D" id="2.40.50.580">
    <property type="match status" value="1"/>
</dbReference>
<dbReference type="Gene3D" id="3.40.1350.60">
    <property type="match status" value="1"/>
</dbReference>
<dbReference type="HAMAP" id="MF_00095">
    <property type="entry name" value="SfsA"/>
    <property type="match status" value="1"/>
</dbReference>
<dbReference type="InterPro" id="IPR005224">
    <property type="entry name" value="SfsA"/>
</dbReference>
<dbReference type="InterPro" id="IPR040452">
    <property type="entry name" value="SfsA_C"/>
</dbReference>
<dbReference type="InterPro" id="IPR041465">
    <property type="entry name" value="SfsA_N"/>
</dbReference>
<dbReference type="NCBIfam" id="TIGR00230">
    <property type="entry name" value="sfsA"/>
    <property type="match status" value="1"/>
</dbReference>
<dbReference type="PANTHER" id="PTHR30545">
    <property type="entry name" value="SUGAR FERMENTATION STIMULATION PROTEIN A"/>
    <property type="match status" value="1"/>
</dbReference>
<dbReference type="PANTHER" id="PTHR30545:SF2">
    <property type="entry name" value="SUGAR FERMENTATION STIMULATION PROTEIN A"/>
    <property type="match status" value="1"/>
</dbReference>
<dbReference type="Pfam" id="PF03749">
    <property type="entry name" value="SfsA"/>
    <property type="match status" value="1"/>
</dbReference>
<dbReference type="Pfam" id="PF17746">
    <property type="entry name" value="SfsA_N"/>
    <property type="match status" value="1"/>
</dbReference>
<protein>
    <recommendedName>
        <fullName evidence="1">Sugar fermentation stimulation protein homolog</fullName>
    </recommendedName>
</protein>
<name>SFSA_ENT38</name>
<gene>
    <name evidence="1" type="primary">sfsA</name>
    <name type="ordered locus">Ent638_0686</name>
</gene>
<comment type="similarity">
    <text evidence="1">Belongs to the SfsA family.</text>
</comment>
<proteinExistence type="inferred from homology"/>